<protein>
    <recommendedName>
        <fullName evidence="6">MFS-type transporter FVEG_12626</fullName>
    </recommendedName>
    <alternativeName>
        <fullName evidence="6">Fusarium detoxification of benzoxazolinone cluster 2 protein FVEG_12626</fullName>
        <shortName evidence="6">FDB2 cluster protein FVEG_12626</shortName>
    </alternativeName>
</protein>
<reference key="1">
    <citation type="journal article" date="2010" name="Nature">
        <title>Comparative genomics reveals mobile pathogenicity chromosomes in Fusarium.</title>
        <authorList>
            <person name="Ma L.-J."/>
            <person name="van der Does H.C."/>
            <person name="Borkovich K.A."/>
            <person name="Coleman J.J."/>
            <person name="Daboussi M.-J."/>
            <person name="Di Pietro A."/>
            <person name="Dufresne M."/>
            <person name="Freitag M."/>
            <person name="Grabherr M."/>
            <person name="Henrissat B."/>
            <person name="Houterman P.M."/>
            <person name="Kang S."/>
            <person name="Shim W.-B."/>
            <person name="Woloshuk C."/>
            <person name="Xie X."/>
            <person name="Xu J.-R."/>
            <person name="Antoniw J."/>
            <person name="Baker S.E."/>
            <person name="Bluhm B.H."/>
            <person name="Breakspear A."/>
            <person name="Brown D.W."/>
            <person name="Butchko R.A.E."/>
            <person name="Chapman S."/>
            <person name="Coulson R."/>
            <person name="Coutinho P.M."/>
            <person name="Danchin E.G.J."/>
            <person name="Diener A."/>
            <person name="Gale L.R."/>
            <person name="Gardiner D.M."/>
            <person name="Goff S."/>
            <person name="Hammond-Kosack K.E."/>
            <person name="Hilburn K."/>
            <person name="Hua-Van A."/>
            <person name="Jonkers W."/>
            <person name="Kazan K."/>
            <person name="Kodira C.D."/>
            <person name="Koehrsen M."/>
            <person name="Kumar L."/>
            <person name="Lee Y.-H."/>
            <person name="Li L."/>
            <person name="Manners J.M."/>
            <person name="Miranda-Saavedra D."/>
            <person name="Mukherjee M."/>
            <person name="Park G."/>
            <person name="Park J."/>
            <person name="Park S.-Y."/>
            <person name="Proctor R.H."/>
            <person name="Regev A."/>
            <person name="Ruiz-Roldan M.C."/>
            <person name="Sain D."/>
            <person name="Sakthikumar S."/>
            <person name="Sykes S."/>
            <person name="Schwartz D.C."/>
            <person name="Turgeon B.G."/>
            <person name="Wapinski I."/>
            <person name="Yoder O."/>
            <person name="Young S."/>
            <person name="Zeng Q."/>
            <person name="Zhou S."/>
            <person name="Galagan J."/>
            <person name="Cuomo C.A."/>
            <person name="Kistler H.C."/>
            <person name="Rep M."/>
        </authorList>
    </citation>
    <scope>NUCLEOTIDE SEQUENCE [LARGE SCALE GENOMIC DNA]</scope>
    <source>
        <strain>M3125 / FGSC 7600</strain>
    </source>
</reference>
<reference key="2">
    <citation type="journal article" date="2002" name="Mol. Plant Microbe Interact.">
        <title>Fdb1 and Fdb2, Fusarium verticillioides loci necessary for detoxification of preformed antimicrobials from corn.</title>
        <authorList>
            <person name="Glenn A.E."/>
            <person name="Gold S.E."/>
            <person name="Bacon C.W."/>
        </authorList>
    </citation>
    <scope>FUNCTION</scope>
</reference>
<reference key="3">
    <citation type="journal article" date="2016" name="PLoS ONE">
        <title>Two horizontally transferred xenobiotic resistance gene clusters associated with detoxification of benzoxazolinones by Fusarium species.</title>
        <authorList>
            <person name="Glenn A.E."/>
            <person name="Davis C.B."/>
            <person name="Gao M."/>
            <person name="Gold S.E."/>
            <person name="Mitchell T.R."/>
            <person name="Proctor R.H."/>
            <person name="Stewart J.E."/>
            <person name="Snook M.E."/>
        </authorList>
    </citation>
    <scope>FUNCTION</scope>
</reference>
<feature type="chain" id="PRO_0000454611" description="MFS-type transporter FVEG_12626">
    <location>
        <begin position="1"/>
        <end position="415"/>
    </location>
</feature>
<feature type="transmembrane region" description="Helical" evidence="1">
    <location>
        <begin position="27"/>
        <end position="47"/>
    </location>
</feature>
<feature type="transmembrane region" description="Helical" evidence="1">
    <location>
        <begin position="63"/>
        <end position="83"/>
    </location>
</feature>
<feature type="transmembrane region" description="Helical" evidence="1">
    <location>
        <begin position="93"/>
        <end position="113"/>
    </location>
</feature>
<feature type="transmembrane region" description="Helical" evidence="1">
    <location>
        <begin position="118"/>
        <end position="138"/>
    </location>
</feature>
<feature type="transmembrane region" description="Helical" evidence="1">
    <location>
        <begin position="151"/>
        <end position="171"/>
    </location>
</feature>
<feature type="transmembrane region" description="Helical" evidence="1">
    <location>
        <begin position="178"/>
        <end position="198"/>
    </location>
</feature>
<feature type="transmembrane region" description="Helical" evidence="1">
    <location>
        <begin position="227"/>
        <end position="247"/>
    </location>
</feature>
<feature type="transmembrane region" description="Helical" evidence="1">
    <location>
        <begin position="264"/>
        <end position="284"/>
    </location>
</feature>
<feature type="transmembrane region" description="Helical" evidence="1">
    <location>
        <begin position="290"/>
        <end position="310"/>
    </location>
</feature>
<feature type="transmembrane region" description="Helical" evidence="1">
    <location>
        <begin position="318"/>
        <end position="338"/>
    </location>
</feature>
<feature type="transmembrane region" description="Helical" evidence="1">
    <location>
        <begin position="354"/>
        <end position="374"/>
    </location>
</feature>
<feature type="transmembrane region" description="Helical" evidence="1">
    <location>
        <begin position="386"/>
        <end position="406"/>
    </location>
</feature>
<feature type="region of interest" description="Disordered" evidence="3">
    <location>
        <begin position="1"/>
        <end position="22"/>
    </location>
</feature>
<feature type="compositionally biased region" description="Basic and acidic residues" evidence="3">
    <location>
        <begin position="1"/>
        <end position="18"/>
    </location>
</feature>
<feature type="glycosylation site" description="N-linked (GlcNAc...) asparagine" evidence="2">
    <location>
        <position position="199"/>
    </location>
</feature>
<keyword id="KW-0325">Glycoprotein</keyword>
<keyword id="KW-0472">Membrane</keyword>
<keyword id="KW-1185">Reference proteome</keyword>
<keyword id="KW-0812">Transmembrane</keyword>
<keyword id="KW-1133">Transmembrane helix</keyword>
<keyword id="KW-0813">Transport</keyword>
<organism>
    <name type="scientific">Gibberella moniliformis (strain M3125 / FGSC 7600)</name>
    <name type="common">Maize ear and stalk rot fungus</name>
    <name type="synonym">Fusarium verticillioides</name>
    <dbReference type="NCBI Taxonomy" id="334819"/>
    <lineage>
        <taxon>Eukaryota</taxon>
        <taxon>Fungi</taxon>
        <taxon>Dikarya</taxon>
        <taxon>Ascomycota</taxon>
        <taxon>Pezizomycotina</taxon>
        <taxon>Sordariomycetes</taxon>
        <taxon>Hypocreomycetidae</taxon>
        <taxon>Hypocreales</taxon>
        <taxon>Nectriaceae</taxon>
        <taxon>Fusarium</taxon>
        <taxon>Fusarium fujikuroi species complex</taxon>
    </lineage>
</organism>
<accession>W7MTI3</accession>
<evidence type="ECO:0000255" key="1"/>
<evidence type="ECO:0000255" key="2">
    <source>
        <dbReference type="PROSITE-ProRule" id="PRU00498"/>
    </source>
</evidence>
<evidence type="ECO:0000256" key="3">
    <source>
        <dbReference type="SAM" id="MobiDB-lite"/>
    </source>
</evidence>
<evidence type="ECO:0000269" key="4">
    <source>
    </source>
</evidence>
<evidence type="ECO:0000269" key="5">
    <source>
    </source>
</evidence>
<evidence type="ECO:0000303" key="6">
    <source>
    </source>
</evidence>
<evidence type="ECO:0000305" key="7"/>
<evidence type="ECO:0000305" key="8">
    <source>
    </source>
</evidence>
<name>FDB26_GIBM7</name>
<comment type="function">
    <text evidence="4 5">MFS-type transporter; part of the Fusarium detoxification of benzoxazolinone cluster 2 (FDB2) involved in the degradation of benzoxazolinones produced by the host plant (PubMed:26808652). Maize, wheat, and rye produce the 2 benzoxazinone phytoanticipins 2,4-dihy-droxy-7-methoxy-1,4-benzoxazin-3-one (DIMBOA) and 2,4-dihydroxy-1,4-benzoxazin-3-one (DIBOA) that, due to their inherent instability once released, spontaneously degrade to the more stable corresponding benzoxazolinones, 6-methoxy-2-benzoxazolinone (MBOA) and 2-benzoxazolinone (BOA), respectively (PubMed:11876429).</text>
</comment>
<comment type="subcellular location">
    <subcellularLocation>
        <location evidence="1">Membrane</location>
        <topology evidence="1">Multi-pass membrane protein</topology>
    </subcellularLocation>
</comment>
<comment type="miscellaneous">
    <text evidence="8">Fusarium verticillioides possesses 2 unlinked loci, FDB1 and FDB2, necessary for detoxification of antimicrobial compounds produced by maize, including 2-benzoxazolinone (BOA) (Probable). The FDB2 cluster arose as a duplication of the FDB1 cluster with rearrangement and expansion by incorporating additional genes (Probable).</text>
</comment>
<comment type="similarity">
    <text evidence="7">Belongs to the major facilitator superfamily. Monocarboxylate porter (TC 2.A.1.13) family.</text>
</comment>
<proteinExistence type="inferred from homology"/>
<sequence length="415" mass="44737">MDPDTEQMRVEKPNHEQPKPNTEFPDGGFKAWSVVVGAFCGLFVGVFQAYYEANQLQDLSPSTVSWIPAISMFIMFITGPFVGRAFDNYGPRYLLLAGTLLHVFGLMMASISSQYYQYILSQAICSPLGAAMVLYPSFSCVTTWFRQKRALALGITASGSSLGGTILPIVVNRLIPRIGFGWTMRACAFLLLGLLLVTNLTVRSRVAPQPKEAGIIAYLRPFTSLSFILTSLAGFFYSMGMFIPITFMVTYGEHVGLSNSMAGYLVSIFNASSGIGRILPGYIADKVGSFNVSIAAATLSTIFMLGLWLPGHSRESAIAFAALFGFSSGTYTAISPALIAHISDLEEIGTRSGTMYAFMSVAALTGSPIGGALISSAGGSYWKLQVFAGCMLGAGTVFYVLARLYITKGRLWEKV</sequence>
<dbReference type="EMBL" id="CM000580">
    <property type="protein sequence ID" value="EWG54406.1"/>
    <property type="molecule type" value="Genomic_DNA"/>
</dbReference>
<dbReference type="RefSeq" id="XP_018760597.1">
    <property type="nucleotide sequence ID" value="XM_018901976.1"/>
</dbReference>
<dbReference type="SMR" id="W7MTI3"/>
<dbReference type="GeneID" id="30070056"/>
<dbReference type="KEGG" id="fvr:FVEG_12626"/>
<dbReference type="VEuPathDB" id="FungiDB:FVEG_12626"/>
<dbReference type="OrthoDB" id="65007at110618"/>
<dbReference type="Proteomes" id="UP000009096">
    <property type="component" value="Chromosome 3"/>
</dbReference>
<dbReference type="GO" id="GO:0016020">
    <property type="term" value="C:membrane"/>
    <property type="evidence" value="ECO:0007669"/>
    <property type="project" value="UniProtKB-SubCell"/>
</dbReference>
<dbReference type="GO" id="GO:0022857">
    <property type="term" value="F:transmembrane transporter activity"/>
    <property type="evidence" value="ECO:0007669"/>
    <property type="project" value="InterPro"/>
</dbReference>
<dbReference type="CDD" id="cd17352">
    <property type="entry name" value="MFS_MCT_SLC16"/>
    <property type="match status" value="1"/>
</dbReference>
<dbReference type="Gene3D" id="1.20.1250.20">
    <property type="entry name" value="MFS general substrate transporter like domains"/>
    <property type="match status" value="2"/>
</dbReference>
<dbReference type="InterPro" id="IPR011701">
    <property type="entry name" value="MFS"/>
</dbReference>
<dbReference type="InterPro" id="IPR020846">
    <property type="entry name" value="MFS_dom"/>
</dbReference>
<dbReference type="InterPro" id="IPR036259">
    <property type="entry name" value="MFS_trans_sf"/>
</dbReference>
<dbReference type="InterPro" id="IPR050327">
    <property type="entry name" value="Proton-linked_MCT"/>
</dbReference>
<dbReference type="PANTHER" id="PTHR11360:SF224">
    <property type="entry name" value="MAJOR FACILITATOR SUPERFAMILY (MFS) PROFILE DOMAIN-CONTAINING PROTEIN-RELATED"/>
    <property type="match status" value="1"/>
</dbReference>
<dbReference type="PANTHER" id="PTHR11360">
    <property type="entry name" value="MONOCARBOXYLATE TRANSPORTER"/>
    <property type="match status" value="1"/>
</dbReference>
<dbReference type="Pfam" id="PF07690">
    <property type="entry name" value="MFS_1"/>
    <property type="match status" value="2"/>
</dbReference>
<dbReference type="SUPFAM" id="SSF103473">
    <property type="entry name" value="MFS general substrate transporter"/>
    <property type="match status" value="1"/>
</dbReference>
<dbReference type="PROSITE" id="PS50850">
    <property type="entry name" value="MFS"/>
    <property type="match status" value="1"/>
</dbReference>
<gene>
    <name type="ORF">FVEG_12626</name>
</gene>